<protein>
    <recommendedName>
        <fullName evidence="1">Xaa-Pro dipeptidase</fullName>
        <shortName evidence="1">X-Pro dipeptidase</shortName>
        <ecNumber evidence="1">3.4.13.9</ecNumber>
    </recommendedName>
    <alternativeName>
        <fullName evidence="1">Imidodipeptidase</fullName>
    </alternativeName>
    <alternativeName>
        <fullName evidence="1">Proline dipeptidase</fullName>
        <shortName evidence="1">Prolidase</shortName>
    </alternativeName>
</protein>
<keyword id="KW-0224">Dipeptidase</keyword>
<keyword id="KW-0378">Hydrolase</keyword>
<keyword id="KW-0464">Manganese</keyword>
<keyword id="KW-0479">Metal-binding</keyword>
<keyword id="KW-0482">Metalloprotease</keyword>
<keyword id="KW-0645">Protease</keyword>
<proteinExistence type="inferred from homology"/>
<reference key="1">
    <citation type="submission" date="2009-03" db="EMBL/GenBank/DDBJ databases">
        <title>Complete genome sequence of Edwardsiella ictaluri 93-146.</title>
        <authorList>
            <person name="Williams M.L."/>
            <person name="Gillaspy A.F."/>
            <person name="Dyer D.W."/>
            <person name="Thune R.L."/>
            <person name="Waldbieser G.C."/>
            <person name="Schuster S.C."/>
            <person name="Gipson J."/>
            <person name="Zaitshik J."/>
            <person name="Landry C."/>
            <person name="Lawrence M.L."/>
        </authorList>
    </citation>
    <scope>NUCLEOTIDE SEQUENCE [LARGE SCALE GENOMIC DNA]</scope>
    <source>
        <strain>93-146</strain>
    </source>
</reference>
<accession>C5BCB6</accession>
<dbReference type="EC" id="3.4.13.9" evidence="1"/>
<dbReference type="EMBL" id="CP001600">
    <property type="protein sequence ID" value="ACR67407.1"/>
    <property type="molecule type" value="Genomic_DNA"/>
</dbReference>
<dbReference type="RefSeq" id="WP_015869623.1">
    <property type="nucleotide sequence ID" value="NZ_CP169062.1"/>
</dbReference>
<dbReference type="SMR" id="C5BCB6"/>
<dbReference type="STRING" id="67780.B6E78_11910"/>
<dbReference type="MEROPS" id="M24.003"/>
<dbReference type="GeneID" id="69537259"/>
<dbReference type="KEGG" id="eic:NT01EI_0152"/>
<dbReference type="PATRIC" id="fig|634503.3.peg.143"/>
<dbReference type="HOGENOM" id="CLU_050675_0_0_6"/>
<dbReference type="OrthoDB" id="9806388at2"/>
<dbReference type="Proteomes" id="UP000001485">
    <property type="component" value="Chromosome"/>
</dbReference>
<dbReference type="GO" id="GO:0005829">
    <property type="term" value="C:cytosol"/>
    <property type="evidence" value="ECO:0007669"/>
    <property type="project" value="TreeGrafter"/>
</dbReference>
<dbReference type="GO" id="GO:0004177">
    <property type="term" value="F:aminopeptidase activity"/>
    <property type="evidence" value="ECO:0007669"/>
    <property type="project" value="TreeGrafter"/>
</dbReference>
<dbReference type="GO" id="GO:0046872">
    <property type="term" value="F:metal ion binding"/>
    <property type="evidence" value="ECO:0007669"/>
    <property type="project" value="UniProtKB-KW"/>
</dbReference>
<dbReference type="GO" id="GO:0008235">
    <property type="term" value="F:metalloexopeptidase activity"/>
    <property type="evidence" value="ECO:0007669"/>
    <property type="project" value="UniProtKB-UniRule"/>
</dbReference>
<dbReference type="GO" id="GO:0016795">
    <property type="term" value="F:phosphoric triester hydrolase activity"/>
    <property type="evidence" value="ECO:0007669"/>
    <property type="project" value="InterPro"/>
</dbReference>
<dbReference type="GO" id="GO:0102009">
    <property type="term" value="F:proline dipeptidase activity"/>
    <property type="evidence" value="ECO:0007669"/>
    <property type="project" value="UniProtKB-EC"/>
</dbReference>
<dbReference type="GO" id="GO:0006508">
    <property type="term" value="P:proteolysis"/>
    <property type="evidence" value="ECO:0007669"/>
    <property type="project" value="UniProtKB-KW"/>
</dbReference>
<dbReference type="CDD" id="cd01087">
    <property type="entry name" value="Prolidase"/>
    <property type="match status" value="1"/>
</dbReference>
<dbReference type="Gene3D" id="3.90.230.10">
    <property type="entry name" value="Creatinase/methionine aminopeptidase superfamily"/>
    <property type="match status" value="1"/>
</dbReference>
<dbReference type="Gene3D" id="3.40.350.10">
    <property type="entry name" value="Creatinase/prolidase N-terminal domain"/>
    <property type="match status" value="1"/>
</dbReference>
<dbReference type="HAMAP" id="MF_01279">
    <property type="entry name" value="X_Pro_dipeptid"/>
    <property type="match status" value="1"/>
</dbReference>
<dbReference type="InterPro" id="IPR029149">
    <property type="entry name" value="Creatin/AminoP/Spt16_N"/>
</dbReference>
<dbReference type="InterPro" id="IPR036005">
    <property type="entry name" value="Creatinase/aminopeptidase-like"/>
</dbReference>
<dbReference type="InterPro" id="IPR048819">
    <property type="entry name" value="PepQ_N"/>
</dbReference>
<dbReference type="InterPro" id="IPR000994">
    <property type="entry name" value="Pept_M24"/>
</dbReference>
<dbReference type="InterPro" id="IPR001131">
    <property type="entry name" value="Peptidase_M24B_aminopep-P_CS"/>
</dbReference>
<dbReference type="InterPro" id="IPR052433">
    <property type="entry name" value="X-Pro_dipept-like"/>
</dbReference>
<dbReference type="InterPro" id="IPR022846">
    <property type="entry name" value="X_Pro_dipept"/>
</dbReference>
<dbReference type="NCBIfam" id="NF010133">
    <property type="entry name" value="PRK13607.1"/>
    <property type="match status" value="1"/>
</dbReference>
<dbReference type="PANTHER" id="PTHR43226">
    <property type="entry name" value="XAA-PRO AMINOPEPTIDASE 3"/>
    <property type="match status" value="1"/>
</dbReference>
<dbReference type="PANTHER" id="PTHR43226:SF8">
    <property type="entry name" value="XAA-PRO DIPEPTIDASE"/>
    <property type="match status" value="1"/>
</dbReference>
<dbReference type="Pfam" id="PF21216">
    <property type="entry name" value="PepQ_N"/>
    <property type="match status" value="1"/>
</dbReference>
<dbReference type="Pfam" id="PF00557">
    <property type="entry name" value="Peptidase_M24"/>
    <property type="match status" value="1"/>
</dbReference>
<dbReference type="SUPFAM" id="SSF55920">
    <property type="entry name" value="Creatinase/aminopeptidase"/>
    <property type="match status" value="1"/>
</dbReference>
<dbReference type="PROSITE" id="PS00491">
    <property type="entry name" value="PROLINE_PEPTIDASE"/>
    <property type="match status" value="1"/>
</dbReference>
<evidence type="ECO:0000255" key="1">
    <source>
        <dbReference type="HAMAP-Rule" id="MF_01279"/>
    </source>
</evidence>
<sequence>MDTLASLYTKHLATLQQRARTILERHQLDGLLIHSGEPIARFLDDQDYPFKINPYFKAWVPVTQVPNCWLWIDGVNKPKLWFYSPLDYWHSVSPLPQAFWTEQVEMTAQRHADDIAALLPAARGNVAYIGPNAERARSLGIDEAHQNPQAVLNFLHYHRAYKSEYEQACMREAQKIAVDGHQAALEAFRAGMSEFDINLAYLSATGQGENDVPYDNIIALNRHAAVLHYTHLERRAPSEMHSFLIDAGAEFHGYAADLTRTYAANGQSDFAALVAEVNQAQQALIATLQTGVRYTDYNLQFHQRLAAILRHHHILTGISDEAAVAQGLTTPFLPHGLGHPLGLQVHDVAGFMQDELGTQMAAPDRYPYLRCTRIMEPGMVMTIEPGLYFIDTLLAPWLEGEFGQHFNRGRIDALRPYGGIRIEDNVIFHAHGVENMTRDLHLA</sequence>
<organism>
    <name type="scientific">Edwardsiella ictaluri (strain 93-146)</name>
    <dbReference type="NCBI Taxonomy" id="634503"/>
    <lineage>
        <taxon>Bacteria</taxon>
        <taxon>Pseudomonadati</taxon>
        <taxon>Pseudomonadota</taxon>
        <taxon>Gammaproteobacteria</taxon>
        <taxon>Enterobacterales</taxon>
        <taxon>Hafniaceae</taxon>
        <taxon>Edwardsiella</taxon>
    </lineage>
</organism>
<feature type="chain" id="PRO_1000214203" description="Xaa-Pro dipeptidase">
    <location>
        <begin position="1"/>
        <end position="443"/>
    </location>
</feature>
<feature type="binding site" evidence="1">
    <location>
        <position position="246"/>
    </location>
    <ligand>
        <name>Mn(2+)</name>
        <dbReference type="ChEBI" id="CHEBI:29035"/>
        <label>2</label>
    </ligand>
</feature>
<feature type="binding site" evidence="1">
    <location>
        <position position="257"/>
    </location>
    <ligand>
        <name>Mn(2+)</name>
        <dbReference type="ChEBI" id="CHEBI:29035"/>
        <label>1</label>
    </ligand>
</feature>
<feature type="binding site" evidence="1">
    <location>
        <position position="257"/>
    </location>
    <ligand>
        <name>Mn(2+)</name>
        <dbReference type="ChEBI" id="CHEBI:29035"/>
        <label>2</label>
    </ligand>
</feature>
<feature type="binding site" evidence="1">
    <location>
        <position position="339"/>
    </location>
    <ligand>
        <name>Mn(2+)</name>
        <dbReference type="ChEBI" id="CHEBI:29035"/>
        <label>1</label>
    </ligand>
</feature>
<feature type="binding site" evidence="1">
    <location>
        <position position="384"/>
    </location>
    <ligand>
        <name>Mn(2+)</name>
        <dbReference type="ChEBI" id="CHEBI:29035"/>
        <label>1</label>
    </ligand>
</feature>
<feature type="binding site" evidence="1">
    <location>
        <position position="423"/>
    </location>
    <ligand>
        <name>Mn(2+)</name>
        <dbReference type="ChEBI" id="CHEBI:29035"/>
        <label>1</label>
    </ligand>
</feature>
<feature type="binding site" evidence="1">
    <location>
        <position position="423"/>
    </location>
    <ligand>
        <name>Mn(2+)</name>
        <dbReference type="ChEBI" id="CHEBI:29035"/>
        <label>2</label>
    </ligand>
</feature>
<comment type="function">
    <text evidence="1">Splits dipeptides with a prolyl residue in the C-terminal position.</text>
</comment>
<comment type="catalytic activity">
    <reaction evidence="1">
        <text>Xaa-L-Pro dipeptide + H2O = an L-alpha-amino acid + L-proline</text>
        <dbReference type="Rhea" id="RHEA:76407"/>
        <dbReference type="ChEBI" id="CHEBI:15377"/>
        <dbReference type="ChEBI" id="CHEBI:59869"/>
        <dbReference type="ChEBI" id="CHEBI:60039"/>
        <dbReference type="ChEBI" id="CHEBI:195196"/>
        <dbReference type="EC" id="3.4.13.9"/>
    </reaction>
</comment>
<comment type="cofactor">
    <cofactor evidence="1">
        <name>Mn(2+)</name>
        <dbReference type="ChEBI" id="CHEBI:29035"/>
    </cofactor>
    <text evidence="1">Binds 2 manganese ions per subunit.</text>
</comment>
<comment type="similarity">
    <text evidence="1">Belongs to the peptidase M24B family. Bacterial-type prolidase subfamily.</text>
</comment>
<gene>
    <name evidence="1" type="primary">pepQ</name>
    <name type="ordered locus">NT01EI_0152</name>
</gene>
<name>PEPQ_EDWI9</name>